<proteinExistence type="evidence at protein level"/>
<evidence type="ECO:0000250" key="1">
    <source>
        <dbReference type="UniProtKB" id="P53564"/>
    </source>
</evidence>
<evidence type="ECO:0000250" key="2">
    <source>
        <dbReference type="UniProtKB" id="P53565"/>
    </source>
</evidence>
<evidence type="ECO:0000255" key="3"/>
<evidence type="ECO:0000255" key="4">
    <source>
        <dbReference type="PROSITE-ProRule" id="PRU00108"/>
    </source>
</evidence>
<evidence type="ECO:0000255" key="5">
    <source>
        <dbReference type="PROSITE-ProRule" id="PRU00374"/>
    </source>
</evidence>
<evidence type="ECO:0000256" key="6">
    <source>
        <dbReference type="SAM" id="MobiDB-lite"/>
    </source>
</evidence>
<evidence type="ECO:0000269" key="7">
    <source>
    </source>
</evidence>
<evidence type="ECO:0000269" key="8">
    <source>
    </source>
</evidence>
<evidence type="ECO:0000303" key="9">
    <source>
    </source>
</evidence>
<evidence type="ECO:0000303" key="10">
    <source>
    </source>
</evidence>
<evidence type="ECO:0000303" key="11">
    <source>
    </source>
</evidence>
<evidence type="ECO:0000303" key="12">
    <source>
    </source>
</evidence>
<evidence type="ECO:0000305" key="13"/>
<evidence type="ECO:0000312" key="14">
    <source>
        <dbReference type="HGNC" id="HGNC:2557"/>
    </source>
</evidence>
<evidence type="ECO:0007744" key="15">
    <source>
    </source>
</evidence>
<evidence type="ECO:0007744" key="16">
    <source>
    </source>
</evidence>
<evidence type="ECO:0007744" key="17">
    <source>
    </source>
</evidence>
<evidence type="ECO:0007744" key="18">
    <source>
    </source>
</evidence>
<evidence type="ECO:0007744" key="19">
    <source>
    </source>
</evidence>
<dbReference type="EMBL" id="M74099">
    <property type="status" value="NOT_ANNOTATED_CDS"/>
    <property type="molecule type" value="mRNA"/>
</dbReference>
<dbReference type="EMBL" id="AK122726">
    <property type="protein sequence ID" value="BAG53691.1"/>
    <property type="molecule type" value="mRNA"/>
</dbReference>
<dbReference type="EMBL" id="AC005072">
    <property type="status" value="NOT_ANNOTATED_CDS"/>
    <property type="molecule type" value="Genomic_DNA"/>
</dbReference>
<dbReference type="EMBL" id="AC005086">
    <property type="protein sequence ID" value="AAP22331.1"/>
    <property type="molecule type" value="Genomic_DNA"/>
</dbReference>
<dbReference type="EMBL" id="AC005088">
    <property type="status" value="NOT_ANNOTATED_CDS"/>
    <property type="molecule type" value="Genomic_DNA"/>
</dbReference>
<dbReference type="EMBL" id="AC005096">
    <property type="protein sequence ID" value="AAS07410.1"/>
    <property type="molecule type" value="Genomic_DNA"/>
</dbReference>
<dbReference type="EMBL" id="AC005103">
    <property type="protein sequence ID" value="AAS07388.1"/>
    <property type="molecule type" value="Genomic_DNA"/>
</dbReference>
<dbReference type="EMBL" id="AC092788">
    <property type="protein sequence ID" value="AAS07523.1"/>
    <property type="molecule type" value="Genomic_DNA"/>
</dbReference>
<dbReference type="EMBL" id="BC066592">
    <property type="protein sequence ID" value="AAH66592.1"/>
    <property type="molecule type" value="mRNA"/>
</dbReference>
<dbReference type="EMBL" id="AF047825">
    <property type="protein sequence ID" value="AAC78778.1"/>
    <property type="molecule type" value="Genomic_DNA"/>
</dbReference>
<dbReference type="CCDS" id="CCDS56498.1">
    <molecule id="P39880-3"/>
</dbReference>
<dbReference type="CCDS" id="CCDS56499.1">
    <molecule id="P39880-9"/>
</dbReference>
<dbReference type="CCDS" id="CCDS5721.1">
    <molecule id="P39880-1"/>
</dbReference>
<dbReference type="RefSeq" id="NP_001189472.1">
    <molecule id="P39880-3"/>
    <property type="nucleotide sequence ID" value="NM_001202543.2"/>
</dbReference>
<dbReference type="RefSeq" id="NP_001189473.1">
    <property type="nucleotide sequence ID" value="NM_001202544.2"/>
</dbReference>
<dbReference type="RefSeq" id="NP_001189474.1">
    <molecule id="P39880-9"/>
    <property type="nucleotide sequence ID" value="NM_001202545.3"/>
</dbReference>
<dbReference type="RefSeq" id="NP_852477.1">
    <property type="nucleotide sequence ID" value="NM_181500.3"/>
</dbReference>
<dbReference type="RefSeq" id="NP_853530.2">
    <molecule id="P39880-1"/>
    <property type="nucleotide sequence ID" value="NM_181552.4"/>
</dbReference>
<dbReference type="RefSeq" id="XP_006715917.2">
    <molecule id="P39880-2"/>
    <property type="nucleotide sequence ID" value="XM_006715854.3"/>
</dbReference>
<dbReference type="RefSeq" id="XP_054213279.1">
    <molecule id="P39880-2"/>
    <property type="nucleotide sequence ID" value="XM_054357304.1"/>
</dbReference>
<dbReference type="SMR" id="P39880"/>
<dbReference type="BioGRID" id="107903">
    <property type="interactions" value="222"/>
</dbReference>
<dbReference type="ELM" id="P39880"/>
<dbReference type="FunCoup" id="P39880">
    <property type="interactions" value="3027"/>
</dbReference>
<dbReference type="IntAct" id="P39880">
    <property type="interactions" value="100"/>
</dbReference>
<dbReference type="MINT" id="P39880"/>
<dbReference type="STRING" id="9606.ENSP00000353401"/>
<dbReference type="GlyCosmos" id="P39880">
    <property type="glycosylation" value="1 site, 1 glycan"/>
</dbReference>
<dbReference type="GlyGen" id="P39880">
    <property type="glycosylation" value="8 sites, 1 N-linked glycan (1 site), 1 O-linked glycan (5 sites)"/>
</dbReference>
<dbReference type="iPTMnet" id="P39880"/>
<dbReference type="MetOSite" id="P39880"/>
<dbReference type="PhosphoSitePlus" id="P39880"/>
<dbReference type="BioMuta" id="CUX1"/>
<dbReference type="jPOST" id="P39880"/>
<dbReference type="MassIVE" id="P39880"/>
<dbReference type="PaxDb" id="9606-ENSP00000353401"/>
<dbReference type="PeptideAtlas" id="P39880"/>
<dbReference type="ProteomicsDB" id="55321">
    <molecule id="P39880-1"/>
</dbReference>
<dbReference type="ProteomicsDB" id="55322">
    <molecule id="P39880-2"/>
</dbReference>
<dbReference type="ProteomicsDB" id="55323">
    <molecule id="P39880-3"/>
</dbReference>
<dbReference type="ProteomicsDB" id="55324">
    <molecule id="P39880-4"/>
</dbReference>
<dbReference type="ProteomicsDB" id="55325">
    <molecule id="P39880-5"/>
</dbReference>
<dbReference type="ProteomicsDB" id="55326">
    <molecule id="P39880-6"/>
</dbReference>
<dbReference type="Pumba" id="P39880"/>
<dbReference type="Antibodypedia" id="48390">
    <property type="antibodies" value="420 antibodies from 35 providers"/>
</dbReference>
<dbReference type="DNASU" id="1523"/>
<dbReference type="Ensembl" id="ENST00000292535.12">
    <molecule id="P39880-1"/>
    <property type="protein sequence ID" value="ENSP00000292535.7"/>
    <property type="gene ID" value="ENSG00000257923.12"/>
</dbReference>
<dbReference type="Ensembl" id="ENST00000360264.7">
    <molecule id="P39880-3"/>
    <property type="protein sequence ID" value="ENSP00000353401.3"/>
    <property type="gene ID" value="ENSG00000257923.12"/>
</dbReference>
<dbReference type="Ensembl" id="ENST00000425244.6">
    <molecule id="P39880-9"/>
    <property type="protein sequence ID" value="ENSP00000409745.2"/>
    <property type="gene ID" value="ENSG00000257923.12"/>
</dbReference>
<dbReference type="Ensembl" id="ENST00000546411.7">
    <molecule id="P39880-1"/>
    <property type="protein sequence ID" value="ENSP00000450125.3"/>
    <property type="gene ID" value="ENSG00000257923.12"/>
</dbReference>
<dbReference type="Ensembl" id="ENST00000549414.6">
    <molecule id="P39880-2"/>
    <property type="protein sequence ID" value="ENSP00000446630.2"/>
    <property type="gene ID" value="ENSG00000257923.12"/>
</dbReference>
<dbReference type="Ensembl" id="ENST00000550008.6">
    <molecule id="P39880-5"/>
    <property type="protein sequence ID" value="ENSP00000447373.2"/>
    <property type="gene ID" value="ENSG00000257923.12"/>
</dbReference>
<dbReference type="Ensembl" id="ENST00000556210.1">
    <molecule id="P39880-6"/>
    <property type="protein sequence ID" value="ENSP00000451558.1"/>
    <property type="gene ID" value="ENSG00000257923.12"/>
</dbReference>
<dbReference type="GeneID" id="1523"/>
<dbReference type="MANE-Select" id="ENST00000292535.12">
    <property type="protein sequence ID" value="ENSP00000292535.7"/>
    <property type="RefSeq nucleotide sequence ID" value="NM_181552.4"/>
    <property type="RefSeq protein sequence ID" value="NP_853530.2"/>
</dbReference>
<dbReference type="UCSC" id="uc003uys.5">
    <molecule id="P39880-1"/>
    <property type="organism name" value="human"/>
</dbReference>
<dbReference type="AGR" id="HGNC:2557"/>
<dbReference type="CTD" id="1523"/>
<dbReference type="DisGeNET" id="1523"/>
<dbReference type="GeneCards" id="CUX1"/>
<dbReference type="HGNC" id="HGNC:2557">
    <property type="gene designation" value="CUX1"/>
</dbReference>
<dbReference type="HPA" id="ENSG00000257923">
    <property type="expression patterns" value="Low tissue specificity"/>
</dbReference>
<dbReference type="MalaCards" id="CUX1"/>
<dbReference type="MIM" id="116896">
    <property type="type" value="gene"/>
</dbReference>
<dbReference type="MIM" id="618330">
    <property type="type" value="phenotype"/>
</dbReference>
<dbReference type="neXtProt" id="NX_P39880"/>
<dbReference type="OpenTargets" id="ENSG00000257923"/>
<dbReference type="Orphanet" id="178469">
    <property type="disease" value="Autosomal dominant non-syndromic intellectual disability"/>
</dbReference>
<dbReference type="PharmGKB" id="PA162382924"/>
<dbReference type="VEuPathDB" id="HostDB:ENSG00000257923"/>
<dbReference type="eggNOG" id="KOG0963">
    <property type="taxonomic scope" value="Eukaryota"/>
</dbReference>
<dbReference type="eggNOG" id="KOG2252">
    <property type="taxonomic scope" value="Eukaryota"/>
</dbReference>
<dbReference type="GeneTree" id="ENSGT00940000159751"/>
<dbReference type="HOGENOM" id="CLU_016758_0_0_1"/>
<dbReference type="InParanoid" id="P39880"/>
<dbReference type="OMA" id="LESKPYH"/>
<dbReference type="OrthoDB" id="10257567at2759"/>
<dbReference type="PAN-GO" id="P39880">
    <property type="GO annotations" value="4 GO annotations based on evolutionary models"/>
</dbReference>
<dbReference type="PhylomeDB" id="P39880"/>
<dbReference type="TreeFam" id="TF318206"/>
<dbReference type="PathwayCommons" id="P39880"/>
<dbReference type="Reactome" id="R-HSA-1839117">
    <property type="pathway name" value="Signaling by cytosolic FGFR1 fusion mutants"/>
</dbReference>
<dbReference type="Reactome" id="R-HSA-5655302">
    <property type="pathway name" value="Signaling by FGFR1 in disease"/>
</dbReference>
<dbReference type="SignaLink" id="P39880"/>
<dbReference type="SIGNOR" id="P39880"/>
<dbReference type="BioGRID-ORCS" id="1523">
    <property type="hits" value="26 hits in 1205 CRISPR screens"/>
</dbReference>
<dbReference type="ChiTaRS" id="CUX1">
    <property type="organism name" value="human"/>
</dbReference>
<dbReference type="GeneWiki" id="CUTL1"/>
<dbReference type="GenomeRNAi" id="1523"/>
<dbReference type="Pharos" id="P39880">
    <property type="development level" value="Tbio"/>
</dbReference>
<dbReference type="Proteomes" id="UP000005640">
    <property type="component" value="Chromosome 7"/>
</dbReference>
<dbReference type="RNAct" id="P39880">
    <property type="molecule type" value="protein"/>
</dbReference>
<dbReference type="Bgee" id="ENSG00000257923">
    <property type="expression patterns" value="Expressed in secondary oocyte and 208 other cell types or tissues"/>
</dbReference>
<dbReference type="ExpressionAtlas" id="P39880">
    <property type="expression patterns" value="baseline and differential"/>
</dbReference>
<dbReference type="GO" id="GO:0000785">
    <property type="term" value="C:chromatin"/>
    <property type="evidence" value="ECO:0000247"/>
    <property type="project" value="NTNU_SB"/>
</dbReference>
<dbReference type="GO" id="GO:0005829">
    <property type="term" value="C:cytosol"/>
    <property type="evidence" value="ECO:0000304"/>
    <property type="project" value="Reactome"/>
</dbReference>
<dbReference type="GO" id="GO:0005794">
    <property type="term" value="C:Golgi apparatus"/>
    <property type="evidence" value="ECO:0000314"/>
    <property type="project" value="HPA"/>
</dbReference>
<dbReference type="GO" id="GO:0005654">
    <property type="term" value="C:nucleoplasm"/>
    <property type="evidence" value="ECO:0000314"/>
    <property type="project" value="HPA"/>
</dbReference>
<dbReference type="GO" id="GO:0005634">
    <property type="term" value="C:nucleus"/>
    <property type="evidence" value="ECO:0000314"/>
    <property type="project" value="UniProtKB"/>
</dbReference>
<dbReference type="GO" id="GO:0000981">
    <property type="term" value="F:DNA-binding transcription factor activity, RNA polymerase II-specific"/>
    <property type="evidence" value="ECO:0000247"/>
    <property type="project" value="NTNU_SB"/>
</dbReference>
<dbReference type="GO" id="GO:0000977">
    <property type="term" value="F:RNA polymerase II transcription regulatory region sequence-specific DNA binding"/>
    <property type="evidence" value="ECO:0000250"/>
    <property type="project" value="CAFA"/>
</dbReference>
<dbReference type="GO" id="GO:0043565">
    <property type="term" value="F:sequence-specific DNA binding"/>
    <property type="evidence" value="ECO:0000314"/>
    <property type="project" value="UniProtKB"/>
</dbReference>
<dbReference type="GO" id="GO:1990837">
    <property type="term" value="F:sequence-specific double-stranded DNA binding"/>
    <property type="evidence" value="ECO:0000314"/>
    <property type="project" value="ARUK-UCL"/>
</dbReference>
<dbReference type="GO" id="GO:0000122">
    <property type="term" value="P:negative regulation of transcription by RNA polymerase II"/>
    <property type="evidence" value="ECO:0000304"/>
    <property type="project" value="ProtInc"/>
</dbReference>
<dbReference type="GO" id="GO:0050775">
    <property type="term" value="P:positive regulation of dendrite morphogenesis"/>
    <property type="evidence" value="ECO:0000250"/>
    <property type="project" value="CAFA"/>
</dbReference>
<dbReference type="GO" id="GO:0006357">
    <property type="term" value="P:regulation of transcription by RNA polymerase II"/>
    <property type="evidence" value="ECO:0000318"/>
    <property type="project" value="GO_Central"/>
</dbReference>
<dbReference type="CDD" id="cd00086">
    <property type="entry name" value="homeodomain"/>
    <property type="match status" value="1"/>
</dbReference>
<dbReference type="FunFam" id="1.10.260.40:FF:000004">
    <property type="entry name" value="Cut-like homeobox 1a"/>
    <property type="match status" value="2"/>
</dbReference>
<dbReference type="FunFam" id="1.10.260.40:FF:000010">
    <property type="entry name" value="Cut-like homeobox 1a"/>
    <property type="match status" value="1"/>
</dbReference>
<dbReference type="FunFam" id="1.10.10.60:FF:000116">
    <property type="entry name" value="Cut-like homeobox 2b"/>
    <property type="match status" value="1"/>
</dbReference>
<dbReference type="Gene3D" id="1.10.10.60">
    <property type="entry name" value="Homeodomain-like"/>
    <property type="match status" value="1"/>
</dbReference>
<dbReference type="Gene3D" id="1.10.260.40">
    <property type="entry name" value="lambda repressor-like DNA-binding domains"/>
    <property type="match status" value="3"/>
</dbReference>
<dbReference type="InterPro" id="IPR003350">
    <property type="entry name" value="CUT_dom"/>
</dbReference>
<dbReference type="InterPro" id="IPR001356">
    <property type="entry name" value="HD"/>
</dbReference>
<dbReference type="InterPro" id="IPR017970">
    <property type="entry name" value="Homeobox_CS"/>
</dbReference>
<dbReference type="InterPro" id="IPR009057">
    <property type="entry name" value="Homeodomain-like_sf"/>
</dbReference>
<dbReference type="InterPro" id="IPR010982">
    <property type="entry name" value="Lambda_DNA-bd_dom_sf"/>
</dbReference>
<dbReference type="PANTHER" id="PTHR14043">
    <property type="entry name" value="CCAAT DISPLACEMENT PROTEIN-RELATED"/>
    <property type="match status" value="1"/>
</dbReference>
<dbReference type="PANTHER" id="PTHR14043:SF4">
    <property type="entry name" value="HOMEOBOX PROTEIN CUT-LIKE 1"/>
    <property type="match status" value="1"/>
</dbReference>
<dbReference type="Pfam" id="PF02376">
    <property type="entry name" value="CUT"/>
    <property type="match status" value="3"/>
</dbReference>
<dbReference type="Pfam" id="PF25398">
    <property type="entry name" value="CUX1_N"/>
    <property type="match status" value="1"/>
</dbReference>
<dbReference type="Pfam" id="PF00046">
    <property type="entry name" value="Homeodomain"/>
    <property type="match status" value="1"/>
</dbReference>
<dbReference type="SMART" id="SM01109">
    <property type="entry name" value="CUT"/>
    <property type="match status" value="3"/>
</dbReference>
<dbReference type="SMART" id="SM00389">
    <property type="entry name" value="HOX"/>
    <property type="match status" value="1"/>
</dbReference>
<dbReference type="SUPFAM" id="SSF46689">
    <property type="entry name" value="Homeodomain-like"/>
    <property type="match status" value="1"/>
</dbReference>
<dbReference type="SUPFAM" id="SSF47413">
    <property type="entry name" value="lambda repressor-like DNA-binding domains"/>
    <property type="match status" value="3"/>
</dbReference>
<dbReference type="PROSITE" id="PS51042">
    <property type="entry name" value="CUT"/>
    <property type="match status" value="3"/>
</dbReference>
<dbReference type="PROSITE" id="PS00027">
    <property type="entry name" value="HOMEOBOX_1"/>
    <property type="match status" value="1"/>
</dbReference>
<dbReference type="PROSITE" id="PS50071">
    <property type="entry name" value="HOMEOBOX_2"/>
    <property type="match status" value="1"/>
</dbReference>
<keyword id="KW-0025">Alternative splicing</keyword>
<keyword id="KW-0175">Coiled coil</keyword>
<keyword id="KW-0217">Developmental protein</keyword>
<keyword id="KW-0225">Disease variant</keyword>
<keyword id="KW-0238">DNA-binding</keyword>
<keyword id="KW-0371">Homeobox</keyword>
<keyword id="KW-0991">Intellectual disability</keyword>
<keyword id="KW-1017">Isopeptide bond</keyword>
<keyword id="KW-0539">Nucleus</keyword>
<keyword id="KW-0597">Phosphoprotein</keyword>
<keyword id="KW-1267">Proteomics identification</keyword>
<keyword id="KW-1185">Reference proteome</keyword>
<keyword id="KW-0677">Repeat</keyword>
<keyword id="KW-0678">Repressor</keyword>
<keyword id="KW-0804">Transcription</keyword>
<keyword id="KW-0805">Transcription regulation</keyword>
<keyword id="KW-0832">Ubl conjugation</keyword>
<feature type="chain" id="PRO_0000202393" description="Homeobox protein cut-like 1">
    <location>
        <begin position="1"/>
        <end position="1505"/>
    </location>
</feature>
<feature type="chain" id="PRO_0000450797" description="CDP/Cux p110" evidence="11">
    <location>
        <begin position="756"/>
        <end position="1505"/>
    </location>
</feature>
<feature type="DNA-binding region" description="CUT 1" evidence="5">
    <location>
        <begin position="542"/>
        <end position="629"/>
    </location>
</feature>
<feature type="DNA-binding region" description="CUT 2" evidence="5">
    <location>
        <begin position="934"/>
        <end position="1021"/>
    </location>
</feature>
<feature type="DNA-binding region" description="CUT 3" evidence="5">
    <location>
        <begin position="1117"/>
        <end position="1204"/>
    </location>
</feature>
<feature type="DNA-binding region" description="Homeobox" evidence="4">
    <location>
        <begin position="1244"/>
        <end position="1303"/>
    </location>
</feature>
<feature type="region of interest" description="Disordered" evidence="6">
    <location>
        <begin position="396"/>
        <end position="455"/>
    </location>
</feature>
<feature type="region of interest" description="Disordered" evidence="6">
    <location>
        <begin position="512"/>
        <end position="552"/>
    </location>
</feature>
<feature type="region of interest" description="Disordered" evidence="6">
    <location>
        <begin position="646"/>
        <end position="669"/>
    </location>
</feature>
<feature type="region of interest" description="Disordered" evidence="6">
    <location>
        <begin position="682"/>
        <end position="704"/>
    </location>
</feature>
<feature type="region of interest" description="Disordered" evidence="6">
    <location>
        <begin position="768"/>
        <end position="802"/>
    </location>
</feature>
<feature type="region of interest" description="Disordered" evidence="6">
    <location>
        <begin position="815"/>
        <end position="930"/>
    </location>
</feature>
<feature type="region of interest" description="Disordered" evidence="6">
    <location>
        <begin position="1036"/>
        <end position="1110"/>
    </location>
</feature>
<feature type="region of interest" description="Disordered" evidence="6">
    <location>
        <begin position="1210"/>
        <end position="1247"/>
    </location>
</feature>
<feature type="region of interest" description="Disordered" evidence="6">
    <location>
        <begin position="1312"/>
        <end position="1480"/>
    </location>
</feature>
<feature type="coiled-coil region" evidence="3">
    <location>
        <begin position="56"/>
        <end position="407"/>
    </location>
</feature>
<feature type="compositionally biased region" description="Polar residues" evidence="6">
    <location>
        <begin position="396"/>
        <end position="407"/>
    </location>
</feature>
<feature type="compositionally biased region" description="Polar residues" evidence="6">
    <location>
        <begin position="440"/>
        <end position="451"/>
    </location>
</feature>
<feature type="compositionally biased region" description="Low complexity" evidence="6">
    <location>
        <begin position="516"/>
        <end position="546"/>
    </location>
</feature>
<feature type="compositionally biased region" description="Low complexity" evidence="6">
    <location>
        <begin position="694"/>
        <end position="703"/>
    </location>
</feature>
<feature type="compositionally biased region" description="Basic and acidic residues" evidence="6">
    <location>
        <begin position="815"/>
        <end position="853"/>
    </location>
</feature>
<feature type="compositionally biased region" description="Polar residues" evidence="6">
    <location>
        <begin position="868"/>
        <end position="877"/>
    </location>
</feature>
<feature type="compositionally biased region" description="Polar residues" evidence="6">
    <location>
        <begin position="887"/>
        <end position="911"/>
    </location>
</feature>
<feature type="compositionally biased region" description="Polar residues" evidence="6">
    <location>
        <begin position="1036"/>
        <end position="1049"/>
    </location>
</feature>
<feature type="compositionally biased region" description="Low complexity" evidence="6">
    <location>
        <begin position="1050"/>
        <end position="1066"/>
    </location>
</feature>
<feature type="compositionally biased region" description="Polar residues" evidence="6">
    <location>
        <begin position="1230"/>
        <end position="1242"/>
    </location>
</feature>
<feature type="compositionally biased region" description="Low complexity" evidence="6">
    <location>
        <begin position="1316"/>
        <end position="1333"/>
    </location>
</feature>
<feature type="compositionally biased region" description="Basic and acidic residues" evidence="6">
    <location>
        <begin position="1353"/>
        <end position="1368"/>
    </location>
</feature>
<feature type="compositionally biased region" description="Basic and acidic residues" evidence="6">
    <location>
        <begin position="1384"/>
        <end position="1394"/>
    </location>
</feature>
<feature type="compositionally biased region" description="Low complexity" evidence="6">
    <location>
        <begin position="1405"/>
        <end position="1436"/>
    </location>
</feature>
<feature type="compositionally biased region" description="Low complexity" evidence="6">
    <location>
        <begin position="1443"/>
        <end position="1455"/>
    </location>
</feature>
<feature type="compositionally biased region" description="Basic and acidic residues" evidence="6">
    <location>
        <begin position="1467"/>
        <end position="1476"/>
    </location>
</feature>
<feature type="site" description="Cleavage; by CTSL" evidence="7">
    <location>
        <begin position="643"/>
        <end position="644"/>
    </location>
</feature>
<feature type="site" description="Cleavage; by CTSL" evidence="7">
    <location>
        <begin position="747"/>
        <end position="755"/>
    </location>
</feature>
<feature type="modified residue" description="Phosphoserine" evidence="15">
    <location>
        <position position="763"/>
    </location>
</feature>
<feature type="modified residue" description="Phosphoserine" evidence="2">
    <location>
        <position position="909"/>
    </location>
</feature>
<feature type="modified residue" description="Phosphoserine" evidence="16">
    <location>
        <position position="1059"/>
    </location>
</feature>
<feature type="modified residue" description="Phosphoserine" evidence="2">
    <location>
        <position position="1069"/>
    </location>
</feature>
<feature type="modified residue" description="Phosphoserine" evidence="16">
    <location>
        <position position="1270"/>
    </location>
</feature>
<feature type="modified residue" description="Phosphoserine" evidence="1">
    <location>
        <position position="1337"/>
    </location>
</feature>
<feature type="modified residue" description="Phosphoserine" evidence="16">
    <location>
        <position position="1455"/>
    </location>
</feature>
<feature type="modified residue" description="Phosphoserine" evidence="16">
    <location>
        <position position="1486"/>
    </location>
</feature>
<feature type="modified residue" description="Phosphoserine" evidence="1">
    <location>
        <position position="1496"/>
    </location>
</feature>
<feature type="cross-link" description="Glycyl lysine isopeptide (Lys-Gly) (interchain with G-Cter in SUMO2)" evidence="17 19">
    <location>
        <position position="785"/>
    </location>
</feature>
<feature type="cross-link" description="Glycyl lysine isopeptide (Lys-Gly) (interchain with G-Cter in SUMO2)" evidence="18 19">
    <location>
        <position position="811"/>
    </location>
</feature>
<feature type="cross-link" description="Glycyl lysine isopeptide (Lys-Gly) (interchain with G-Cter in SUMO2)" evidence="19">
    <location>
        <position position="842"/>
    </location>
</feature>
<feature type="cross-link" description="Glycyl lysine isopeptide (Lys-Gly) (interchain with G-Cter in SUMO2)" evidence="19">
    <location>
        <position position="1284"/>
    </location>
</feature>
<feature type="splice variant" id="VSP_015747" description="In isoform 3 and isoform 11." evidence="10 12">
    <original>MLCVAGARLK</original>
    <variation>MAANVGSMFQYWKRFDLQQLQ</variation>
    <location>
        <begin position="1"/>
        <end position="10"/>
    </location>
</feature>
<feature type="splice variant" id="VSP_045924" description="In isoform 11." evidence="10">
    <location>
        <begin position="90"/>
        <end position="135"/>
    </location>
</feature>
<feature type="splice variant" id="VSP_017358" description="In isoform 5 and isoform 7." evidence="13">
    <location>
        <begin position="408"/>
        <end position="509"/>
    </location>
</feature>
<feature type="splice variant" id="VSP_045925" description="In isoform 11." evidence="10">
    <original>SARRKGKDQPESRRPGSLPAPPPSQLPRNPGEQASNTNGTHQFSPAGLSQDFFSSSLASPSLPLASTGKFALNSLLQRQLMQSFYSKAMQEAGSTSMIFSTGPYSTNSISSQSPLQQSPDVNGMAPSPSQSESAGSVSEGEEMDTAEIARQVKEQLIKHNIGQRIFGHYVLGLSQGSVSEILARPKPWNKLTVRGKEPFHKMKQFLSDEQNILALRSIQGRQRENPGQSLNRLFQEVPKRRNGSEGNITTRIRASETGS</original>
    <variation>RCAELQVRITEAVATATEQRELIARLEQDLSIIQSIQRPDAEGAAEHRLEKIPEPIKEATALFYGPAAPASGALPEGQVDSLLSIISSQRERFRARNQELEAENRLAQHTLQALQSELDSLRADNIKLFEKIKFLQSYPGRGSGSDDTELRYSSQYEERLDPFSSFSKRERQRKYLSLSPWDKATLSMGRLVLSNKMARTIGFFYTLFLHCLVFLVLYKLAWSESMERDCATFCAKKFADHLHKFHENDNGAAAGDLWQ</variation>
    <location>
        <begin position="409"/>
        <end position="667"/>
    </location>
</feature>
<feature type="splice variant" id="VSP_017359" description="In isoform 6 and isoform 7." evidence="13">
    <location>
        <begin position="632"/>
        <end position="687"/>
    </location>
</feature>
<feature type="splice variant" id="VSP_002310" description="In isoform 2." evidence="9">
    <location>
        <begin position="632"/>
        <end position="653"/>
    </location>
</feature>
<feature type="splice variant" id="VSP_045926" description="In isoform 11." evidence="10">
    <location>
        <begin position="668"/>
        <end position="1505"/>
    </location>
</feature>
<feature type="sequence variant" id="VAR_081977" description="In GDDI." evidence="8">
    <location>
        <begin position="862"/>
        <end position="1505"/>
    </location>
</feature>
<feature type="sequence conflict" description="In Ref. 1; M74099." evidence="13" ref="1">
    <original>A</original>
    <variation>R</variation>
    <location>
        <position position="5"/>
    </location>
</feature>
<feature type="sequence conflict" description="In Ref. 2; BAG53691." evidence="13" ref="2">
    <original>K</original>
    <variation>I</variation>
    <location>
        <position position="145"/>
    </location>
</feature>
<feature type="sequence conflict" description="In Ref. 2; BAG53691." evidence="13" ref="2">
    <original>A</original>
    <variation>V</variation>
    <location>
        <position position="260"/>
    </location>
</feature>
<feature type="sequence conflict" description="In Ref. 1; M74099." evidence="13" ref="1">
    <original>DA</original>
    <variation>EP</variation>
    <location>
        <begin position="704"/>
        <end position="705"/>
    </location>
</feature>
<feature type="sequence conflict" description="In Ref. 1; M74099." evidence="13" ref="1">
    <original>E</original>
    <variation>R</variation>
    <location>
        <position position="844"/>
    </location>
</feature>
<feature type="sequence conflict" description="In Ref. 1; M74099." evidence="13" ref="1">
    <original>S</original>
    <variation>T</variation>
    <location>
        <position position="1436"/>
    </location>
</feature>
<feature type="modified residue" description="Phosphoserine" evidence="16">
    <location sequence="P39880-9">
        <position position="540"/>
    </location>
</feature>
<protein>
    <recommendedName>
        <fullName evidence="13">Homeobox protein cut-like 1</fullName>
    </recommendedName>
    <alternativeName>
        <fullName>CCAAT displacement protein</fullName>
        <shortName>CDP</shortName>
    </alternativeName>
    <alternativeName>
        <fullName evidence="11">CDP/Cux p200</fullName>
    </alternativeName>
    <alternativeName>
        <fullName>Homeobox protein cux-1</fullName>
    </alternativeName>
    <component>
        <recommendedName>
            <fullName evidence="11">CDP/Cux p110</fullName>
        </recommendedName>
    </component>
</protein>
<accession>P39880</accession>
<accession>B3KV79</accession>
<accession>J3KQV9</accession>
<accession>Q6NYH4</accession>
<accession>Q75LE5</accession>
<accession>Q75MT2</accession>
<accession>Q75MT3</accession>
<accession>Q86UJ7</accession>
<accession>Q9UEV5</accession>
<sequence length="1505" mass="164187">MLCVAGARLKRELDATATVLANRQDESEQSRKRLIEQSREFKKNTPEDLRKQVAPLLKSFQGEIDALSKRSKEAEAAFLNVYKRLIDVPDPVPALDLGQQLQLKVQRLHDIETENQKLRETLEEYNKEFAEVKNQEVTIKALKEKIREYEQTLKNQAETIALEKEQKLQNDFAEKERKLQETQMSTTSKLEEAEHKVQSLQTALEKTRTELFDLKTKYDEETTAKADEIEMIMTDLERANQRAEVAQREAETLREQLSSANHSLQLASQIQKAPDVEQAIEVLTRSSLEVELAAKEREIAQLVEDVQRLQASLTKLRENSASQISQLEQQLSAKNSTLKQLEEKLKGQADYEEVKKELNILKSMEFAPSEGAGTQDAAKPLEVLLLEKNRSLQSENAALRISNSDLSGSARRKGKDQPESRRPGSLPAPPPSQLPRNPGEQASNTNGTHQFSPAGLSQDFFSSSLASPSLPLASTGKFALNSLLQRQLMQSFYSKAMQEAGSTSMIFSTGPYSTNSISSQSPLQQSPDVNGMAPSPSQSESAGSVSEGEEMDTAEIARQVKEQLIKHNIGQRIFGHYVLGLSQGSVSEILARPKPWNKLTVRGKEPFHKMKQFLSDEQNILALRSIQGRQRENPGQSLNRLFQEVPKRRNGSEGNITTRIRASETGSDEAIKSILEQAKRELQVQKTAEPAQPSSASGSGNSDDAIRSILQQARREMEAQQAALDPALKQAPLSQSDITILTPKLLSTSPMPTVSSYPPLAISLKKPSAAPEAGASALPNPPALKKEAQDAPGLDPQGAADCAQGVLRQVKNEVGRSGAWKDHWWSAVQPERRNAASSEEAKAEETGGGKEKGSGGSGGGSQPRAERSQLQGPSSSEYWKEWPSAESPYSQSSELSLTGASRSETPQNSPLPSSPIVPMSKPTKPSVPPLTPEQYEVYMYQEVDTIELTRQVKEKLAKNGICQRIFGEKVLGLSQGSVSDMLSRPKPWSKLTQKGREPFIRMQLWLNGELGQGVLPVQGQQQGPVLHSVTSLQDPLQQGCVSSESTPKTSASCSPAPESPMSSSESVKSLTELVQQPCPPIEASKDSKPPEPSDPPASDSQPTTPLPLSGHSALSIQELVAMSPELDTYGITKRVKEVLTDNNLGQRLFGETILGLTQGSVSDLLARPKPWHKLSLKGREPFVRMQLWLNDPNNVEKLMDMKRMEKKAYMKRRHSSVSDSQPCEPPSVGTEYSQGASPQPQHQLKKPRVVLAPEEKEALKRAYQQKPYPSPKTIEDLATQLNLKTSTVINWFHNYRSRIRRELFIEEIQAGSQGQAGASDSPSARSGRAAPSSEGDSCDGVEATEGPGSADTEEPKSQGEAEREEVPRPAEQTEPPPSGTPGPDDARDDDHEGGPVEGPGPLPSPASATATAAPAAPEDAATSAAAAPGEGPAAPSSAPPPSNSSSSSAPRRPSSLQSLFGLPEAAGARDSRDNPLRKKKAANLNSIIHRLEKAASREEPIEWEF</sequence>
<reference key="1">
    <citation type="journal article" date="1992" name="Nat. Genet.">
        <title>Human CCAAT displacement protein is homologous to the Drosophila homeoprotein, cut.</title>
        <authorList>
            <person name="Neufeld E.J."/>
            <person name="Skalnik D.G."/>
            <person name="Lievens P.M.-J."/>
            <person name="Orkin S.H."/>
        </authorList>
    </citation>
    <scope>NUCLEOTIDE SEQUENCE [MRNA] (ISOFORMS 1 AND 2)</scope>
    <source>
        <tissue>Umbilical vein</tissue>
    </source>
</reference>
<reference key="2">
    <citation type="journal article" date="2004" name="Nat. Genet.">
        <title>Complete sequencing and characterization of 21,243 full-length human cDNAs.</title>
        <authorList>
            <person name="Ota T."/>
            <person name="Suzuki Y."/>
            <person name="Nishikawa T."/>
            <person name="Otsuki T."/>
            <person name="Sugiyama T."/>
            <person name="Irie R."/>
            <person name="Wakamatsu A."/>
            <person name="Hayashi K."/>
            <person name="Sato H."/>
            <person name="Nagai K."/>
            <person name="Kimura K."/>
            <person name="Makita H."/>
            <person name="Sekine M."/>
            <person name="Obayashi M."/>
            <person name="Nishi T."/>
            <person name="Shibahara T."/>
            <person name="Tanaka T."/>
            <person name="Ishii S."/>
            <person name="Yamamoto J."/>
            <person name="Saito K."/>
            <person name="Kawai Y."/>
            <person name="Isono Y."/>
            <person name="Nakamura Y."/>
            <person name="Nagahari K."/>
            <person name="Murakami K."/>
            <person name="Yasuda T."/>
            <person name="Iwayanagi T."/>
            <person name="Wagatsuma M."/>
            <person name="Shiratori A."/>
            <person name="Sudo H."/>
            <person name="Hosoiri T."/>
            <person name="Kaku Y."/>
            <person name="Kodaira H."/>
            <person name="Kondo H."/>
            <person name="Sugawara M."/>
            <person name="Takahashi M."/>
            <person name="Kanda K."/>
            <person name="Yokoi T."/>
            <person name="Furuya T."/>
            <person name="Kikkawa E."/>
            <person name="Omura Y."/>
            <person name="Abe K."/>
            <person name="Kamihara K."/>
            <person name="Katsuta N."/>
            <person name="Sato K."/>
            <person name="Tanikawa M."/>
            <person name="Yamazaki M."/>
            <person name="Ninomiya K."/>
            <person name="Ishibashi T."/>
            <person name="Yamashita H."/>
            <person name="Murakawa K."/>
            <person name="Fujimori K."/>
            <person name="Tanai H."/>
            <person name="Kimata M."/>
            <person name="Watanabe M."/>
            <person name="Hiraoka S."/>
            <person name="Chiba Y."/>
            <person name="Ishida S."/>
            <person name="Ono Y."/>
            <person name="Takiguchi S."/>
            <person name="Watanabe S."/>
            <person name="Yosida M."/>
            <person name="Hotuta T."/>
            <person name="Kusano J."/>
            <person name="Kanehori K."/>
            <person name="Takahashi-Fujii A."/>
            <person name="Hara H."/>
            <person name="Tanase T.-O."/>
            <person name="Nomura Y."/>
            <person name="Togiya S."/>
            <person name="Komai F."/>
            <person name="Hara R."/>
            <person name="Takeuchi K."/>
            <person name="Arita M."/>
            <person name="Imose N."/>
            <person name="Musashino K."/>
            <person name="Yuuki H."/>
            <person name="Oshima A."/>
            <person name="Sasaki N."/>
            <person name="Aotsuka S."/>
            <person name="Yoshikawa Y."/>
            <person name="Matsunawa H."/>
            <person name="Ichihara T."/>
            <person name="Shiohata N."/>
            <person name="Sano S."/>
            <person name="Moriya S."/>
            <person name="Momiyama H."/>
            <person name="Satoh N."/>
            <person name="Takami S."/>
            <person name="Terashima Y."/>
            <person name="Suzuki O."/>
            <person name="Nakagawa S."/>
            <person name="Senoh A."/>
            <person name="Mizoguchi H."/>
            <person name="Goto Y."/>
            <person name="Shimizu F."/>
            <person name="Wakebe H."/>
            <person name="Hishigaki H."/>
            <person name="Watanabe T."/>
            <person name="Sugiyama A."/>
            <person name="Takemoto M."/>
            <person name="Kawakami B."/>
            <person name="Yamazaki M."/>
            <person name="Watanabe K."/>
            <person name="Kumagai A."/>
            <person name="Itakura S."/>
            <person name="Fukuzumi Y."/>
            <person name="Fujimori Y."/>
            <person name="Komiyama M."/>
            <person name="Tashiro H."/>
            <person name="Tanigami A."/>
            <person name="Fujiwara T."/>
            <person name="Ono T."/>
            <person name="Yamada K."/>
            <person name="Fujii Y."/>
            <person name="Ozaki K."/>
            <person name="Hirao M."/>
            <person name="Ohmori Y."/>
            <person name="Kawabata A."/>
            <person name="Hikiji T."/>
            <person name="Kobatake N."/>
            <person name="Inagaki H."/>
            <person name="Ikema Y."/>
            <person name="Okamoto S."/>
            <person name="Okitani R."/>
            <person name="Kawakami T."/>
            <person name="Noguchi S."/>
            <person name="Itoh T."/>
            <person name="Shigeta K."/>
            <person name="Senba T."/>
            <person name="Matsumura K."/>
            <person name="Nakajima Y."/>
            <person name="Mizuno T."/>
            <person name="Morinaga M."/>
            <person name="Sasaki M."/>
            <person name="Togashi T."/>
            <person name="Oyama M."/>
            <person name="Hata H."/>
            <person name="Watanabe M."/>
            <person name="Komatsu T."/>
            <person name="Mizushima-Sugano J."/>
            <person name="Satoh T."/>
            <person name="Shirai Y."/>
            <person name="Takahashi Y."/>
            <person name="Nakagawa K."/>
            <person name="Okumura K."/>
            <person name="Nagase T."/>
            <person name="Nomura N."/>
            <person name="Kikuchi H."/>
            <person name="Masuho Y."/>
            <person name="Yamashita R."/>
            <person name="Nakai K."/>
            <person name="Yada T."/>
            <person name="Nakamura Y."/>
            <person name="Ohara O."/>
            <person name="Isogai T."/>
            <person name="Sugano S."/>
        </authorList>
    </citation>
    <scope>NUCLEOTIDE SEQUENCE [LARGE SCALE MRNA] (ISOFORM 11)</scope>
    <source>
        <tissue>Brain</tissue>
    </source>
</reference>
<reference key="3">
    <citation type="journal article" date="2003" name="Nature">
        <title>The DNA sequence of human chromosome 7.</title>
        <authorList>
            <person name="Hillier L.W."/>
            <person name="Fulton R.S."/>
            <person name="Fulton L.A."/>
            <person name="Graves T.A."/>
            <person name="Pepin K.H."/>
            <person name="Wagner-McPherson C."/>
            <person name="Layman D."/>
            <person name="Maas J."/>
            <person name="Jaeger S."/>
            <person name="Walker R."/>
            <person name="Wylie K."/>
            <person name="Sekhon M."/>
            <person name="Becker M.C."/>
            <person name="O'Laughlin M.D."/>
            <person name="Schaller M.E."/>
            <person name="Fewell G.A."/>
            <person name="Delehaunty K.D."/>
            <person name="Miner T.L."/>
            <person name="Nash W.E."/>
            <person name="Cordes M."/>
            <person name="Du H."/>
            <person name="Sun H."/>
            <person name="Edwards J."/>
            <person name="Bradshaw-Cordum H."/>
            <person name="Ali J."/>
            <person name="Andrews S."/>
            <person name="Isak A."/>
            <person name="Vanbrunt A."/>
            <person name="Nguyen C."/>
            <person name="Du F."/>
            <person name="Lamar B."/>
            <person name="Courtney L."/>
            <person name="Kalicki J."/>
            <person name="Ozersky P."/>
            <person name="Bielicki L."/>
            <person name="Scott K."/>
            <person name="Holmes A."/>
            <person name="Harkins R."/>
            <person name="Harris A."/>
            <person name="Strong C.M."/>
            <person name="Hou S."/>
            <person name="Tomlinson C."/>
            <person name="Dauphin-Kohlberg S."/>
            <person name="Kozlowicz-Reilly A."/>
            <person name="Leonard S."/>
            <person name="Rohlfing T."/>
            <person name="Rock S.M."/>
            <person name="Tin-Wollam A.-M."/>
            <person name="Abbott A."/>
            <person name="Minx P."/>
            <person name="Maupin R."/>
            <person name="Strowmatt C."/>
            <person name="Latreille P."/>
            <person name="Miller N."/>
            <person name="Johnson D."/>
            <person name="Murray J."/>
            <person name="Woessner J.P."/>
            <person name="Wendl M.C."/>
            <person name="Yang S.-P."/>
            <person name="Schultz B.R."/>
            <person name="Wallis J.W."/>
            <person name="Spieth J."/>
            <person name="Bieri T.A."/>
            <person name="Nelson J.O."/>
            <person name="Berkowicz N."/>
            <person name="Wohldmann P.E."/>
            <person name="Cook L.L."/>
            <person name="Hickenbotham M.T."/>
            <person name="Eldred J."/>
            <person name="Williams D."/>
            <person name="Bedell J.A."/>
            <person name="Mardis E.R."/>
            <person name="Clifton S.W."/>
            <person name="Chissoe S.L."/>
            <person name="Marra M.A."/>
            <person name="Raymond C."/>
            <person name="Haugen E."/>
            <person name="Gillett W."/>
            <person name="Zhou Y."/>
            <person name="James R."/>
            <person name="Phelps K."/>
            <person name="Iadanoto S."/>
            <person name="Bubb K."/>
            <person name="Simms E."/>
            <person name="Levy R."/>
            <person name="Clendenning J."/>
            <person name="Kaul R."/>
            <person name="Kent W.J."/>
            <person name="Furey T.S."/>
            <person name="Baertsch R.A."/>
            <person name="Brent M.R."/>
            <person name="Keibler E."/>
            <person name="Flicek P."/>
            <person name="Bork P."/>
            <person name="Suyama M."/>
            <person name="Bailey J.A."/>
            <person name="Portnoy M.E."/>
            <person name="Torrents D."/>
            <person name="Chinwalla A.T."/>
            <person name="Gish W.R."/>
            <person name="Eddy S.R."/>
            <person name="McPherson J.D."/>
            <person name="Olson M.V."/>
            <person name="Eichler E.E."/>
            <person name="Green E.D."/>
            <person name="Waterston R.H."/>
            <person name="Wilson R.K."/>
        </authorList>
    </citation>
    <scope>NUCLEOTIDE SEQUENCE [LARGE SCALE GENOMIC DNA]</scope>
</reference>
<reference key="4">
    <citation type="journal article" date="2004" name="Genome Res.">
        <title>The status, quality, and expansion of the NIH full-length cDNA project: the Mammalian Gene Collection (MGC).</title>
        <authorList>
            <consortium name="The MGC Project Team"/>
        </authorList>
    </citation>
    <scope>NUCLEOTIDE SEQUENCE [LARGE SCALE MRNA] (ISOFORM 3)</scope>
    <source>
        <tissue>Duodenum</tissue>
    </source>
</reference>
<reference key="5">
    <citation type="journal article" date="1998" name="Genome Res.">
        <title>Large-scale sequencing of two regions in human chromosome 7q22: analysis of 650 kb of genomic sequence around the EPO and CUTL1 loci reveals 17 genes.</title>
        <authorList>
            <person name="Gloeckner G."/>
            <person name="Scherer S."/>
            <person name="Schattevoy R."/>
            <person name="Boright A.P."/>
            <person name="Weber J."/>
            <person name="Tsui L.-C."/>
            <person name="Rosenthal A."/>
        </authorList>
    </citation>
    <scope>NUCLEOTIDE SEQUENCE [GENOMIC DNA] OF 48-224 (ISOFORMS 1/2/3)</scope>
</reference>
<reference key="6">
    <citation type="journal article" date="2000" name="Gene">
        <title>Exon/intron structure and alternative transcripts of the CUTL1 gene.</title>
        <authorList>
            <person name="Rong Zeng W."/>
            <person name="Soucie E."/>
            <person name="Sung Moon N."/>
            <person name="Martin-Soudant N."/>
            <person name="Berube G."/>
            <person name="Leduy L."/>
            <person name="Nepveu A."/>
        </authorList>
    </citation>
    <scope>ALTERNATIVE SPLICING (ISOFORMS 5; 6 AND 7)</scope>
</reference>
<reference key="7">
    <citation type="journal article" date="2004" name="Mol. Cell">
        <title>A cathepsin L isoform that is devoid of a signal peptide localizes to the nucleus in S phase and processes the CDP/Cux transcription factor.</title>
        <authorList>
            <person name="Goulet B."/>
            <person name="Baruch A."/>
            <person name="Moon N.S."/>
            <person name="Poirier M."/>
            <person name="Sansregret L.L."/>
            <person name="Erickson A."/>
            <person name="Bogyo M."/>
            <person name="Nepveu A."/>
        </authorList>
    </citation>
    <scope>FUNCTION</scope>
    <scope>SUBCELLULAR LOCATION</scope>
    <scope>PROTEOLYTIC CLEAVAGE</scope>
    <scope>DNA-BINDING</scope>
</reference>
<reference key="8">
    <citation type="journal article" date="2007" name="Science">
        <title>ATM and ATR substrate analysis reveals extensive protein networks responsive to DNA damage.</title>
        <authorList>
            <person name="Matsuoka S."/>
            <person name="Ballif B.A."/>
            <person name="Smogorzewska A."/>
            <person name="McDonald E.R. III"/>
            <person name="Hurov K.E."/>
            <person name="Luo J."/>
            <person name="Bakalarski C.E."/>
            <person name="Zhao Z."/>
            <person name="Solimini N."/>
            <person name="Lerenthal Y."/>
            <person name="Shiloh Y."/>
            <person name="Gygi S.P."/>
            <person name="Elledge S.J."/>
        </authorList>
    </citation>
    <scope>IDENTIFICATION BY MASS SPECTROMETRY [LARGE SCALE ANALYSIS]</scope>
    <source>
        <tissue>Embryonic kidney</tissue>
    </source>
</reference>
<reference key="9">
    <citation type="journal article" date="2008" name="Proc. Natl. Acad. Sci. U.S.A.">
        <title>A quantitative atlas of mitotic phosphorylation.</title>
        <authorList>
            <person name="Dephoure N."/>
            <person name="Zhou C."/>
            <person name="Villen J."/>
            <person name="Beausoleil S.A."/>
            <person name="Bakalarski C.E."/>
            <person name="Elledge S.J."/>
            <person name="Gygi S.P."/>
        </authorList>
    </citation>
    <scope>IDENTIFICATION BY MASS SPECTROMETRY [LARGE SCALE ANALYSIS]</scope>
    <source>
        <tissue>Cervix carcinoma</tissue>
    </source>
</reference>
<reference key="10">
    <citation type="journal article" date="2009" name="Anal. Chem.">
        <title>Lys-N and trypsin cover complementary parts of the phosphoproteome in a refined SCX-based approach.</title>
        <authorList>
            <person name="Gauci S."/>
            <person name="Helbig A.O."/>
            <person name="Slijper M."/>
            <person name="Krijgsveld J."/>
            <person name="Heck A.J."/>
            <person name="Mohammed S."/>
        </authorList>
    </citation>
    <scope>IDENTIFICATION BY MASS SPECTROMETRY [LARGE SCALE ANALYSIS]</scope>
</reference>
<reference key="11">
    <citation type="journal article" date="2009" name="Sci. Signal.">
        <title>Quantitative phosphoproteomic analysis of T cell receptor signaling reveals system-wide modulation of protein-protein interactions.</title>
        <authorList>
            <person name="Mayya V."/>
            <person name="Lundgren D.H."/>
            <person name="Hwang S.-I."/>
            <person name="Rezaul K."/>
            <person name="Wu L."/>
            <person name="Eng J.K."/>
            <person name="Rodionov V."/>
            <person name="Han D.K."/>
        </authorList>
    </citation>
    <scope>IDENTIFICATION BY MASS SPECTROMETRY [LARGE SCALE ANALYSIS]</scope>
    <source>
        <tissue>Leukemic T-cell</tissue>
    </source>
</reference>
<reference key="12">
    <citation type="journal article" date="2010" name="Sci. Signal.">
        <title>Quantitative phosphoproteomics reveals widespread full phosphorylation site occupancy during mitosis.</title>
        <authorList>
            <person name="Olsen J.V."/>
            <person name="Vermeulen M."/>
            <person name="Santamaria A."/>
            <person name="Kumar C."/>
            <person name="Miller M.L."/>
            <person name="Jensen L.J."/>
            <person name="Gnad F."/>
            <person name="Cox J."/>
            <person name="Jensen T.S."/>
            <person name="Nigg E.A."/>
            <person name="Brunak S."/>
            <person name="Mann M."/>
        </authorList>
    </citation>
    <scope>PHOSPHORYLATION [LARGE SCALE ANALYSIS] AT SER-763</scope>
    <scope>IDENTIFICATION BY MASS SPECTROMETRY [LARGE SCALE ANALYSIS]</scope>
    <source>
        <tissue>Cervix carcinoma</tissue>
    </source>
</reference>
<reference key="13">
    <citation type="journal article" date="2011" name="BMC Syst. Biol.">
        <title>Initial characterization of the human central proteome.</title>
        <authorList>
            <person name="Burkard T.R."/>
            <person name="Planyavsky M."/>
            <person name="Kaupe I."/>
            <person name="Breitwieser F.P."/>
            <person name="Buerckstuemmer T."/>
            <person name="Bennett K.L."/>
            <person name="Superti-Furga G."/>
            <person name="Colinge J."/>
        </authorList>
    </citation>
    <scope>IDENTIFICATION BY MASS SPECTROMETRY [LARGE SCALE ANALYSIS]</scope>
</reference>
<reference key="14">
    <citation type="journal article" date="2013" name="J. Proteome Res.">
        <title>Toward a comprehensive characterization of a human cancer cell phosphoproteome.</title>
        <authorList>
            <person name="Zhou H."/>
            <person name="Di Palma S."/>
            <person name="Preisinger C."/>
            <person name="Peng M."/>
            <person name="Polat A.N."/>
            <person name="Heck A.J."/>
            <person name="Mohammed S."/>
        </authorList>
    </citation>
    <scope>PHOSPHORYLATION [LARGE SCALE ANALYSIS] AT SER-1059; SER-1270; SER-1455 AND SER-1486</scope>
    <scope>PHOSPHORYLATION [LARGE SCALE ANALYSIS] AT SER-540 (ISOFORM 11)</scope>
    <scope>IDENTIFICATION BY MASS SPECTROMETRY [LARGE SCALE ANALYSIS]</scope>
    <source>
        <tissue>Cervix carcinoma</tissue>
        <tissue>Erythroleukemia</tissue>
    </source>
</reference>
<reference key="15">
    <citation type="journal article" date="2015" name="Cell Rep.">
        <title>SUMO-2 orchestrates chromatin modifiers in response to DNA damage.</title>
        <authorList>
            <person name="Hendriks I.A."/>
            <person name="Treffers L.W."/>
            <person name="Verlaan-de Vries M."/>
            <person name="Olsen J.V."/>
            <person name="Vertegaal A.C."/>
        </authorList>
    </citation>
    <scope>SUMOYLATION [LARGE SCALE ANALYSIS] AT LYS-811</scope>
    <scope>IDENTIFICATION BY MASS SPECTROMETRY [LARGE SCALE ANALYSIS]</scope>
</reference>
<reference key="16">
    <citation type="journal article" date="2015" name="Mol. Cell. Proteomics">
        <title>System-wide analysis of SUMOylation dynamics in response to replication stress reveals novel small ubiquitin-like modified target proteins and acceptor lysines relevant for genome stability.</title>
        <authorList>
            <person name="Xiao Z."/>
            <person name="Chang J.G."/>
            <person name="Hendriks I.A."/>
            <person name="Sigurdsson J.O."/>
            <person name="Olsen J.V."/>
            <person name="Vertegaal A.C."/>
        </authorList>
    </citation>
    <scope>SUMOYLATION [LARGE SCALE ANALYSIS] AT LYS-785</scope>
    <scope>IDENTIFICATION BY MASS SPECTROMETRY [LARGE SCALE ANALYSIS]</scope>
</reference>
<reference key="17">
    <citation type="journal article" date="2015" name="Proteomics">
        <title>N-terminome analysis of the human mitochondrial proteome.</title>
        <authorList>
            <person name="Vaca Jacome A.S."/>
            <person name="Rabilloud T."/>
            <person name="Schaeffer-Reiss C."/>
            <person name="Rompais M."/>
            <person name="Ayoub D."/>
            <person name="Lane L."/>
            <person name="Bairoch A."/>
            <person name="Van Dorsselaer A."/>
            <person name="Carapito C."/>
        </authorList>
    </citation>
    <scope>IDENTIFICATION BY MASS SPECTROMETRY [LARGE SCALE ANALYSIS]</scope>
</reference>
<reference key="18">
    <citation type="journal article" date="2017" name="Nat. Struct. Mol. Biol.">
        <title>Site-specific mapping of the human SUMO proteome reveals co-modification with phosphorylation.</title>
        <authorList>
            <person name="Hendriks I.A."/>
            <person name="Lyon D."/>
            <person name="Young C."/>
            <person name="Jensen L.J."/>
            <person name="Vertegaal A.C."/>
            <person name="Nielsen M.L."/>
        </authorList>
    </citation>
    <scope>SUMOYLATION [LARGE SCALE ANALYSIS] AT LYS-785; LYS-811; LYS-842 AND LYS-1284</scope>
    <scope>IDENTIFICATION BY MASS SPECTROMETRY [LARGE SCALE ANALYSIS]</scope>
</reference>
<reference key="19">
    <citation type="journal article" date="2018" name="Ann. Neurol.">
        <title>Haploinsufficiency of CUX1 causes nonsyndromic global developmental delay with possible catch-up development.</title>
        <authorList>
            <person name="Platzer K."/>
            <person name="Cogne B."/>
            <person name="Hague J."/>
            <person name="Marcelis C.L."/>
            <person name="Mitter D."/>
            <person name="Oberndorff K."/>
            <person name="Park S.M."/>
            <person name="Ploos van Amstel H.K."/>
            <person name="Simonic I."/>
            <person name="van der Smagt J.J."/>
            <person name="Stegmann A.P.A."/>
            <person name="Stevens S.J.C."/>
            <person name="Stumpel C.T.R.M."/>
            <person name="Vincent M."/>
            <person name="Lemke J.R."/>
            <person name="Jamra R."/>
        </authorList>
    </citation>
    <scope>INVOLVEMENT IN GDDI</scope>
    <scope>VARIANT GDDI 862-GLN--PHE-1505 DEL</scope>
</reference>
<name>CUX1_HUMAN</name>
<comment type="function">
    <text evidence="1">Transcription factor involved in the control of neuronal differentiation in the brain. Regulates dendrite development and branching, and dendritic spine formation in cortical layers II-III. Also involved in the control of synaptogenesis. In addition, it has probably a broad role in mammalian development as a repressor of developmentally regulated gene expression. May act by preventing binding of positively-activing CCAAT factors to promoters. Component of nf-munr repressor; binds to the matrix attachment regions (MARs) (5' and 3') of the immunoglobulin heavy chain enhancer. Represses T-cell receptor (TCR) beta enhancer function by binding to MARbeta, an ATC-rich DNA sequence located upstream of the TCR beta enhancer. Binds to the TH enhancer; may require the basic helix-loop-helix protein TCF4 as a coactivator.</text>
</comment>
<comment type="function">
    <molecule>CDP/Cux p110</molecule>
    <text evidence="7">Plays a role in cell cycle progression, in particular at the G1/S transition. As cells progress into S phase, a fraction of CUX1 molecules is proteolytically processed into N-terminally truncated proteins of 110 kDa. While CUX1 only transiently binds to DNA and carries the CCAAT-displacement activity, CDP/Cux p110 makes a stable interaction with DNA and stimulates expression of genes such as POLA1.</text>
</comment>
<comment type="subunit">
    <text evidence="1">Interacts with BANP. Interacts with SATB1 (via DNA-binding domains); the interaction inhibits the attachment of both proteins to DNA (By similarity).</text>
</comment>
<comment type="subcellular location">
    <subcellularLocation>
        <location evidence="7">Nucleus</location>
    </subcellularLocation>
</comment>
<comment type="alternative products">
    <event type="alternative splicing"/>
    <isoform>
        <id>P39880-1</id>
        <name>1</name>
        <sequence type="displayed"/>
    </isoform>
    <isoform>
        <id>P39880-2</id>
        <name>2</name>
        <sequence type="described" ref="VSP_002310"/>
    </isoform>
    <isoform>
        <id>P39880-3</id>
        <name>3</name>
        <sequence type="described" ref="VSP_015747"/>
    </isoform>
    <isoform>
        <id>P39880-4</id>
        <name>5</name>
        <sequence type="described" ref="VSP_017358"/>
    </isoform>
    <isoform>
        <id>P39880-5</id>
        <name>6</name>
        <sequence type="described" ref="VSP_017359"/>
    </isoform>
    <isoform>
        <id>P39880-6</id>
        <name>7</name>
        <sequence type="described" ref="VSP_017358 VSP_017359"/>
    </isoform>
    <isoform>
        <id>P39880-9</id>
        <name>11</name>
        <sequence type="described" ref="VSP_015747 VSP_045924 VSP_045925 VSP_045926"/>
    </isoform>
    <isoform>
        <id>Q13948-1</id>
        <name>4</name>
        <name>CASP</name>
        <sequence type="external"/>
    </isoform>
    <isoform>
        <id>Q13948-2</id>
        <name>8</name>
        <sequence type="external"/>
    </isoform>
    <isoform>
        <id>Q13948-9</id>
        <name>9</name>
        <sequence type="external"/>
    </isoform>
    <isoform>
        <id>Q13948-10</id>
        <name>10</name>
        <sequence type="external"/>
    </isoform>
    <text>Additional isoforms seem to exist.</text>
</comment>
<comment type="PTM">
    <text evidence="2">Phosphorylated by PKA.</text>
</comment>
<comment type="PTM">
    <text evidence="7">As cells progress into S phase, a fraction of CUX1 molecules is proteolytically processed into N-terminally truncated proteins of 110 kDa by CTSL. Cell cycle-dependent processing of CUX1 serves to generate a CDP/Cux p110 with distinct DNA binding and transcriptional properties.</text>
</comment>
<comment type="disease" evidence="8">
    <disease id="DI-05485">
        <name>Global developmental delay with or without impaired intellectual development</name>
        <acronym>GDDI</acronym>
        <description>An autosomal dominant disorder characterized by global developmental delay associated with mild-to-moderate intellectual disability, hypotonia and short stature in some patients.</description>
        <dbReference type="MIM" id="618330"/>
    </disease>
    <text>The disease is caused by variants affecting the gene represented in this entry.</text>
</comment>
<comment type="miscellaneous">
    <text>Asn-1290 may participate in regulating DNA-binding activity by promoting homo- and heterodimerization.</text>
</comment>
<comment type="similarity">
    <text evidence="13">Belongs to the CUT homeobox family.</text>
</comment>
<gene>
    <name evidence="14" type="primary">CUX1</name>
    <name type="synonym">CUTL1</name>
</gene>
<organism>
    <name type="scientific">Homo sapiens</name>
    <name type="common">Human</name>
    <dbReference type="NCBI Taxonomy" id="9606"/>
    <lineage>
        <taxon>Eukaryota</taxon>
        <taxon>Metazoa</taxon>
        <taxon>Chordata</taxon>
        <taxon>Craniata</taxon>
        <taxon>Vertebrata</taxon>
        <taxon>Euteleostomi</taxon>
        <taxon>Mammalia</taxon>
        <taxon>Eutheria</taxon>
        <taxon>Euarchontoglires</taxon>
        <taxon>Primates</taxon>
        <taxon>Haplorrhini</taxon>
        <taxon>Catarrhini</taxon>
        <taxon>Hominidae</taxon>
        <taxon>Homo</taxon>
    </lineage>
</organism>